<sequence length="174" mass="18428">MTLILGIDPGSRITGYGVVRQTARGCEYVASGCIRTGSGELHERLQIVFRGVSEIIAQHGPVTMGIERVFMARNADSALKLGQARGAAIVAAAEAGLEIAEYSATQVKQAVAGTGGANKEQVMMMVMHLLKLTQKPQIDASDALAIALCHAHTRSSLVPHGLTTARRRGGRLRL</sequence>
<name>RUVC_PSEPK</name>
<evidence type="ECO:0000255" key="1">
    <source>
        <dbReference type="HAMAP-Rule" id="MF_00034"/>
    </source>
</evidence>
<gene>
    <name evidence="1" type="primary">ruvC</name>
    <name type="ordered locus">PP_1215</name>
</gene>
<organism>
    <name type="scientific">Pseudomonas putida (strain ATCC 47054 / DSM 6125 / CFBP 8728 / NCIMB 11950 / KT2440)</name>
    <dbReference type="NCBI Taxonomy" id="160488"/>
    <lineage>
        <taxon>Bacteria</taxon>
        <taxon>Pseudomonadati</taxon>
        <taxon>Pseudomonadota</taxon>
        <taxon>Gammaproteobacteria</taxon>
        <taxon>Pseudomonadales</taxon>
        <taxon>Pseudomonadaceae</taxon>
        <taxon>Pseudomonas</taxon>
    </lineage>
</organism>
<accession>Q88NJ2</accession>
<feature type="chain" id="PRO_0000183122" description="Crossover junction endodeoxyribonuclease RuvC">
    <location>
        <begin position="1"/>
        <end position="174"/>
    </location>
</feature>
<feature type="active site" evidence="1">
    <location>
        <position position="8"/>
    </location>
</feature>
<feature type="active site" evidence="1">
    <location>
        <position position="67"/>
    </location>
</feature>
<feature type="active site" evidence="1">
    <location>
        <position position="139"/>
    </location>
</feature>
<feature type="binding site" evidence="1">
    <location>
        <position position="8"/>
    </location>
    <ligand>
        <name>Mg(2+)</name>
        <dbReference type="ChEBI" id="CHEBI:18420"/>
        <label>1</label>
    </ligand>
</feature>
<feature type="binding site" evidence="1">
    <location>
        <position position="67"/>
    </location>
    <ligand>
        <name>Mg(2+)</name>
        <dbReference type="ChEBI" id="CHEBI:18420"/>
        <label>2</label>
    </ligand>
</feature>
<feature type="binding site" evidence="1">
    <location>
        <position position="139"/>
    </location>
    <ligand>
        <name>Mg(2+)</name>
        <dbReference type="ChEBI" id="CHEBI:18420"/>
        <label>1</label>
    </ligand>
</feature>
<protein>
    <recommendedName>
        <fullName evidence="1">Crossover junction endodeoxyribonuclease RuvC</fullName>
        <ecNumber evidence="1">3.1.21.10</ecNumber>
    </recommendedName>
    <alternativeName>
        <fullName evidence="1">Holliday junction nuclease RuvC</fullName>
    </alternativeName>
    <alternativeName>
        <fullName evidence="1">Holliday junction resolvase RuvC</fullName>
    </alternativeName>
</protein>
<reference key="1">
    <citation type="journal article" date="2002" name="Environ. Microbiol.">
        <title>Complete genome sequence and comparative analysis of the metabolically versatile Pseudomonas putida KT2440.</title>
        <authorList>
            <person name="Nelson K.E."/>
            <person name="Weinel C."/>
            <person name="Paulsen I.T."/>
            <person name="Dodson R.J."/>
            <person name="Hilbert H."/>
            <person name="Martins dos Santos V.A.P."/>
            <person name="Fouts D.E."/>
            <person name="Gill S.R."/>
            <person name="Pop M."/>
            <person name="Holmes M."/>
            <person name="Brinkac L.M."/>
            <person name="Beanan M.J."/>
            <person name="DeBoy R.T."/>
            <person name="Daugherty S.C."/>
            <person name="Kolonay J.F."/>
            <person name="Madupu R."/>
            <person name="Nelson W.C."/>
            <person name="White O."/>
            <person name="Peterson J.D."/>
            <person name="Khouri H.M."/>
            <person name="Hance I."/>
            <person name="Chris Lee P."/>
            <person name="Holtzapple E.K."/>
            <person name="Scanlan D."/>
            <person name="Tran K."/>
            <person name="Moazzez A."/>
            <person name="Utterback T.R."/>
            <person name="Rizzo M."/>
            <person name="Lee K."/>
            <person name="Kosack D."/>
            <person name="Moestl D."/>
            <person name="Wedler H."/>
            <person name="Lauber J."/>
            <person name="Stjepandic D."/>
            <person name="Hoheisel J."/>
            <person name="Straetz M."/>
            <person name="Heim S."/>
            <person name="Kiewitz C."/>
            <person name="Eisen J.A."/>
            <person name="Timmis K.N."/>
            <person name="Duesterhoeft A."/>
            <person name="Tuemmler B."/>
            <person name="Fraser C.M."/>
        </authorList>
    </citation>
    <scope>NUCLEOTIDE SEQUENCE [LARGE SCALE GENOMIC DNA]</scope>
    <source>
        <strain>ATCC 47054 / DSM 6125 / CFBP 8728 / NCIMB 11950 / KT2440</strain>
    </source>
</reference>
<keyword id="KW-0963">Cytoplasm</keyword>
<keyword id="KW-0227">DNA damage</keyword>
<keyword id="KW-0233">DNA recombination</keyword>
<keyword id="KW-0234">DNA repair</keyword>
<keyword id="KW-0238">DNA-binding</keyword>
<keyword id="KW-0255">Endonuclease</keyword>
<keyword id="KW-0378">Hydrolase</keyword>
<keyword id="KW-0460">Magnesium</keyword>
<keyword id="KW-0479">Metal-binding</keyword>
<keyword id="KW-0540">Nuclease</keyword>
<keyword id="KW-1185">Reference proteome</keyword>
<proteinExistence type="inferred from homology"/>
<comment type="function">
    <text evidence="1">The RuvA-RuvB-RuvC complex processes Holliday junction (HJ) DNA during genetic recombination and DNA repair. Endonuclease that resolves HJ intermediates. Cleaves cruciform DNA by making single-stranded nicks across the HJ at symmetrical positions within the homologous arms, yielding a 5'-phosphate and a 3'-hydroxyl group; requires a central core of homology in the junction. The consensus cleavage sequence is 5'-(A/T)TT(C/G)-3'. Cleavage occurs on the 3'-side of the TT dinucleotide at the point of strand exchange. HJ branch migration catalyzed by RuvA-RuvB allows RuvC to scan DNA until it finds its consensus sequence, where it cleaves and resolves the cruciform DNA.</text>
</comment>
<comment type="catalytic activity">
    <reaction evidence="1">
        <text>Endonucleolytic cleavage at a junction such as a reciprocal single-stranded crossover between two homologous DNA duplexes (Holliday junction).</text>
        <dbReference type="EC" id="3.1.21.10"/>
    </reaction>
</comment>
<comment type="cofactor">
    <cofactor evidence="1">
        <name>Mg(2+)</name>
        <dbReference type="ChEBI" id="CHEBI:18420"/>
    </cofactor>
    <text evidence="1">Binds 2 Mg(2+) ion per subunit.</text>
</comment>
<comment type="subunit">
    <text evidence="1">Homodimer which binds Holliday junction (HJ) DNA. The HJ becomes 2-fold symmetrical on binding to RuvC with unstacked arms; it has a different conformation from HJ DNA in complex with RuvA. In the full resolvosome a probable DNA-RuvA(4)-RuvB(12)-RuvC(2) complex forms which resolves the HJ.</text>
</comment>
<comment type="subcellular location">
    <subcellularLocation>
        <location evidence="1">Cytoplasm</location>
    </subcellularLocation>
</comment>
<comment type="similarity">
    <text evidence="1">Belongs to the RuvC family.</text>
</comment>
<dbReference type="EC" id="3.1.21.10" evidence="1"/>
<dbReference type="EMBL" id="AE015451">
    <property type="protein sequence ID" value="AAN66839.1"/>
    <property type="molecule type" value="Genomic_DNA"/>
</dbReference>
<dbReference type="RefSeq" id="NP_743375.1">
    <property type="nucleotide sequence ID" value="NC_002947.4"/>
</dbReference>
<dbReference type="RefSeq" id="WP_010952366.1">
    <property type="nucleotide sequence ID" value="NZ_CP169744.1"/>
</dbReference>
<dbReference type="SMR" id="Q88NJ2"/>
<dbReference type="STRING" id="160488.PP_1215"/>
<dbReference type="PaxDb" id="160488-PP_1215"/>
<dbReference type="GeneID" id="83678581"/>
<dbReference type="KEGG" id="ppu:PP_1215"/>
<dbReference type="PATRIC" id="fig|160488.4.peg.1291"/>
<dbReference type="eggNOG" id="COG0817">
    <property type="taxonomic scope" value="Bacteria"/>
</dbReference>
<dbReference type="HOGENOM" id="CLU_091257_2_1_6"/>
<dbReference type="OrthoDB" id="9805499at2"/>
<dbReference type="PhylomeDB" id="Q88NJ2"/>
<dbReference type="BioCyc" id="PPUT160488:G1G01-1300-MONOMER"/>
<dbReference type="Proteomes" id="UP000000556">
    <property type="component" value="Chromosome"/>
</dbReference>
<dbReference type="GO" id="GO:0005737">
    <property type="term" value="C:cytoplasm"/>
    <property type="evidence" value="ECO:0007669"/>
    <property type="project" value="UniProtKB-SubCell"/>
</dbReference>
<dbReference type="GO" id="GO:0048476">
    <property type="term" value="C:Holliday junction resolvase complex"/>
    <property type="evidence" value="ECO:0007669"/>
    <property type="project" value="UniProtKB-UniRule"/>
</dbReference>
<dbReference type="GO" id="GO:0008821">
    <property type="term" value="F:crossover junction DNA endonuclease activity"/>
    <property type="evidence" value="ECO:0007669"/>
    <property type="project" value="UniProtKB-UniRule"/>
</dbReference>
<dbReference type="GO" id="GO:0003677">
    <property type="term" value="F:DNA binding"/>
    <property type="evidence" value="ECO:0007669"/>
    <property type="project" value="UniProtKB-KW"/>
</dbReference>
<dbReference type="GO" id="GO:0000287">
    <property type="term" value="F:magnesium ion binding"/>
    <property type="evidence" value="ECO:0007669"/>
    <property type="project" value="UniProtKB-UniRule"/>
</dbReference>
<dbReference type="GO" id="GO:0006310">
    <property type="term" value="P:DNA recombination"/>
    <property type="evidence" value="ECO:0007669"/>
    <property type="project" value="UniProtKB-UniRule"/>
</dbReference>
<dbReference type="GO" id="GO:0006281">
    <property type="term" value="P:DNA repair"/>
    <property type="evidence" value="ECO:0007669"/>
    <property type="project" value="UniProtKB-UniRule"/>
</dbReference>
<dbReference type="CDD" id="cd16962">
    <property type="entry name" value="RuvC"/>
    <property type="match status" value="1"/>
</dbReference>
<dbReference type="FunFam" id="3.30.420.10:FF:000002">
    <property type="entry name" value="Crossover junction endodeoxyribonuclease RuvC"/>
    <property type="match status" value="1"/>
</dbReference>
<dbReference type="Gene3D" id="3.30.420.10">
    <property type="entry name" value="Ribonuclease H-like superfamily/Ribonuclease H"/>
    <property type="match status" value="1"/>
</dbReference>
<dbReference type="HAMAP" id="MF_00034">
    <property type="entry name" value="RuvC"/>
    <property type="match status" value="1"/>
</dbReference>
<dbReference type="InterPro" id="IPR012337">
    <property type="entry name" value="RNaseH-like_sf"/>
</dbReference>
<dbReference type="InterPro" id="IPR036397">
    <property type="entry name" value="RNaseH_sf"/>
</dbReference>
<dbReference type="InterPro" id="IPR020563">
    <property type="entry name" value="X-over_junc_endoDNase_Mg_BS"/>
</dbReference>
<dbReference type="InterPro" id="IPR002176">
    <property type="entry name" value="X-over_junc_endoDNase_RuvC"/>
</dbReference>
<dbReference type="NCBIfam" id="TIGR00228">
    <property type="entry name" value="ruvC"/>
    <property type="match status" value="1"/>
</dbReference>
<dbReference type="PANTHER" id="PTHR30194">
    <property type="entry name" value="CROSSOVER JUNCTION ENDODEOXYRIBONUCLEASE RUVC"/>
    <property type="match status" value="1"/>
</dbReference>
<dbReference type="PANTHER" id="PTHR30194:SF3">
    <property type="entry name" value="CROSSOVER JUNCTION ENDODEOXYRIBONUCLEASE RUVC"/>
    <property type="match status" value="1"/>
</dbReference>
<dbReference type="Pfam" id="PF02075">
    <property type="entry name" value="RuvC"/>
    <property type="match status" value="1"/>
</dbReference>
<dbReference type="PRINTS" id="PR00696">
    <property type="entry name" value="RSOLVASERUVC"/>
</dbReference>
<dbReference type="SUPFAM" id="SSF53098">
    <property type="entry name" value="Ribonuclease H-like"/>
    <property type="match status" value="1"/>
</dbReference>
<dbReference type="PROSITE" id="PS01321">
    <property type="entry name" value="RUVC"/>
    <property type="match status" value="1"/>
</dbReference>